<gene>
    <name evidence="1" type="primary">clpX</name>
    <name type="ordered locus">LVIS_1387</name>
</gene>
<organism>
    <name type="scientific">Levilactobacillus brevis (strain ATCC 367 / BCRC 12310 / CIP 105137 / JCM 1170 / LMG 11437 / NCIMB 947 / NCTC 947)</name>
    <name type="common">Lactobacillus brevis</name>
    <dbReference type="NCBI Taxonomy" id="387344"/>
    <lineage>
        <taxon>Bacteria</taxon>
        <taxon>Bacillati</taxon>
        <taxon>Bacillota</taxon>
        <taxon>Bacilli</taxon>
        <taxon>Lactobacillales</taxon>
        <taxon>Lactobacillaceae</taxon>
        <taxon>Levilactobacillus</taxon>
    </lineage>
</organism>
<feature type="chain" id="PRO_1000024570" description="ATP-dependent Clp protease ATP-binding subunit ClpX">
    <location>
        <begin position="1"/>
        <end position="418"/>
    </location>
</feature>
<feature type="domain" description="ClpX-type ZB" evidence="2">
    <location>
        <begin position="1"/>
        <end position="54"/>
    </location>
</feature>
<feature type="binding site" evidence="2">
    <location>
        <position position="13"/>
    </location>
    <ligand>
        <name>Zn(2+)</name>
        <dbReference type="ChEBI" id="CHEBI:29105"/>
    </ligand>
</feature>
<feature type="binding site" evidence="2">
    <location>
        <position position="16"/>
    </location>
    <ligand>
        <name>Zn(2+)</name>
        <dbReference type="ChEBI" id="CHEBI:29105"/>
    </ligand>
</feature>
<feature type="binding site" evidence="2">
    <location>
        <position position="35"/>
    </location>
    <ligand>
        <name>Zn(2+)</name>
        <dbReference type="ChEBI" id="CHEBI:29105"/>
    </ligand>
</feature>
<feature type="binding site" evidence="2">
    <location>
        <position position="38"/>
    </location>
    <ligand>
        <name>Zn(2+)</name>
        <dbReference type="ChEBI" id="CHEBI:29105"/>
    </ligand>
</feature>
<feature type="binding site" evidence="1">
    <location>
        <begin position="120"/>
        <end position="127"/>
    </location>
    <ligand>
        <name>ATP</name>
        <dbReference type="ChEBI" id="CHEBI:30616"/>
    </ligand>
</feature>
<evidence type="ECO:0000255" key="1">
    <source>
        <dbReference type="HAMAP-Rule" id="MF_00175"/>
    </source>
</evidence>
<evidence type="ECO:0000255" key="2">
    <source>
        <dbReference type="PROSITE-ProRule" id="PRU01250"/>
    </source>
</evidence>
<comment type="function">
    <text evidence="1">ATP-dependent specificity component of the Clp protease. It directs the protease to specific substrates. Can perform chaperone functions in the absence of ClpP.</text>
</comment>
<comment type="subunit">
    <text evidence="1">Component of the ClpX-ClpP complex. Forms a hexameric ring that, in the presence of ATP, binds to fourteen ClpP subunits assembled into a disk-like structure with a central cavity, resembling the structure of eukaryotic proteasomes.</text>
</comment>
<comment type="similarity">
    <text evidence="1">Belongs to the ClpX chaperone family.</text>
</comment>
<accession>Q03QN7</accession>
<sequence length="418" mass="45916">MFENTETEGPVTCSFCGKTQDQVQKIVAGPGVYICNECIDLCKEIIDEEFNQTAAQETLEVPTPADIVKTLNQYVIGQTEAKRTLSVAVYNHYKRVNEMAQETDDDGPELQKSNIAVIGPTGSGKTYLAQSLAKILNVPFAIADATTLTEAGYVGEDVENILLKLLQNADYDVDRAEKGIIYIDEIDKIAKKAENVSITRDVSGEGVQQALLKILEGTIANVPPQGGRKHPQQEFIQIDTTNILFIVGGAFDGIEGIVKRRLGDQTIGFGADSQEQHVLSSGDSLMQHVIPEDLLEFGLIPEFIGRLPILTALEKLDENDLVRILTEPKNALVKQYEKLLALDNVDLQFQPAALREMAKLAIARNTGARGLRSIIEDVMRDIMFDLPSRTDVAKVVITPETVTEHAEPELVLKDQKAS</sequence>
<proteinExistence type="inferred from homology"/>
<name>CLPX_LEVBA</name>
<protein>
    <recommendedName>
        <fullName evidence="1">ATP-dependent Clp protease ATP-binding subunit ClpX</fullName>
    </recommendedName>
</protein>
<dbReference type="EMBL" id="CP000416">
    <property type="protein sequence ID" value="ABJ64485.1"/>
    <property type="molecule type" value="Genomic_DNA"/>
</dbReference>
<dbReference type="RefSeq" id="WP_011668058.1">
    <property type="nucleotide sequence ID" value="NC_008497.1"/>
</dbReference>
<dbReference type="SMR" id="Q03QN7"/>
<dbReference type="STRING" id="387344.LVIS_1387"/>
<dbReference type="GeneID" id="56993157"/>
<dbReference type="KEGG" id="lbr:LVIS_1387"/>
<dbReference type="eggNOG" id="COG1219">
    <property type="taxonomic scope" value="Bacteria"/>
</dbReference>
<dbReference type="HOGENOM" id="CLU_014218_8_2_9"/>
<dbReference type="Proteomes" id="UP000001652">
    <property type="component" value="Chromosome"/>
</dbReference>
<dbReference type="GO" id="GO:0009376">
    <property type="term" value="C:HslUV protease complex"/>
    <property type="evidence" value="ECO:0007669"/>
    <property type="project" value="TreeGrafter"/>
</dbReference>
<dbReference type="GO" id="GO:0005524">
    <property type="term" value="F:ATP binding"/>
    <property type="evidence" value="ECO:0007669"/>
    <property type="project" value="UniProtKB-UniRule"/>
</dbReference>
<dbReference type="GO" id="GO:0016887">
    <property type="term" value="F:ATP hydrolysis activity"/>
    <property type="evidence" value="ECO:0007669"/>
    <property type="project" value="InterPro"/>
</dbReference>
<dbReference type="GO" id="GO:0140662">
    <property type="term" value="F:ATP-dependent protein folding chaperone"/>
    <property type="evidence" value="ECO:0007669"/>
    <property type="project" value="InterPro"/>
</dbReference>
<dbReference type="GO" id="GO:0046983">
    <property type="term" value="F:protein dimerization activity"/>
    <property type="evidence" value="ECO:0007669"/>
    <property type="project" value="InterPro"/>
</dbReference>
<dbReference type="GO" id="GO:0051082">
    <property type="term" value="F:unfolded protein binding"/>
    <property type="evidence" value="ECO:0007669"/>
    <property type="project" value="UniProtKB-UniRule"/>
</dbReference>
<dbReference type="GO" id="GO:0008270">
    <property type="term" value="F:zinc ion binding"/>
    <property type="evidence" value="ECO:0007669"/>
    <property type="project" value="InterPro"/>
</dbReference>
<dbReference type="GO" id="GO:0051301">
    <property type="term" value="P:cell division"/>
    <property type="evidence" value="ECO:0007669"/>
    <property type="project" value="TreeGrafter"/>
</dbReference>
<dbReference type="GO" id="GO:0051603">
    <property type="term" value="P:proteolysis involved in protein catabolic process"/>
    <property type="evidence" value="ECO:0007669"/>
    <property type="project" value="TreeGrafter"/>
</dbReference>
<dbReference type="CDD" id="cd19497">
    <property type="entry name" value="RecA-like_ClpX"/>
    <property type="match status" value="1"/>
</dbReference>
<dbReference type="FunFam" id="1.10.8.60:FF:000002">
    <property type="entry name" value="ATP-dependent Clp protease ATP-binding subunit ClpX"/>
    <property type="match status" value="1"/>
</dbReference>
<dbReference type="FunFam" id="3.40.50.300:FF:000005">
    <property type="entry name" value="ATP-dependent Clp protease ATP-binding subunit ClpX"/>
    <property type="match status" value="1"/>
</dbReference>
<dbReference type="Gene3D" id="1.10.8.60">
    <property type="match status" value="1"/>
</dbReference>
<dbReference type="Gene3D" id="6.20.220.10">
    <property type="entry name" value="ClpX chaperone, C4-type zinc finger domain"/>
    <property type="match status" value="1"/>
</dbReference>
<dbReference type="Gene3D" id="3.40.50.300">
    <property type="entry name" value="P-loop containing nucleotide triphosphate hydrolases"/>
    <property type="match status" value="1"/>
</dbReference>
<dbReference type="HAMAP" id="MF_00175">
    <property type="entry name" value="ClpX"/>
    <property type="match status" value="1"/>
</dbReference>
<dbReference type="InterPro" id="IPR003593">
    <property type="entry name" value="AAA+_ATPase"/>
</dbReference>
<dbReference type="InterPro" id="IPR050052">
    <property type="entry name" value="ATP-dep_Clp_protease_ClpX"/>
</dbReference>
<dbReference type="InterPro" id="IPR003959">
    <property type="entry name" value="ATPase_AAA_core"/>
</dbReference>
<dbReference type="InterPro" id="IPR019489">
    <property type="entry name" value="Clp_ATPase_C"/>
</dbReference>
<dbReference type="InterPro" id="IPR004487">
    <property type="entry name" value="Clp_protease_ATP-bd_su_ClpX"/>
</dbReference>
<dbReference type="InterPro" id="IPR046425">
    <property type="entry name" value="ClpX_bact"/>
</dbReference>
<dbReference type="InterPro" id="IPR027417">
    <property type="entry name" value="P-loop_NTPase"/>
</dbReference>
<dbReference type="InterPro" id="IPR010603">
    <property type="entry name" value="Znf_CppX_C4"/>
</dbReference>
<dbReference type="InterPro" id="IPR038366">
    <property type="entry name" value="Znf_CppX_C4_sf"/>
</dbReference>
<dbReference type="NCBIfam" id="TIGR00382">
    <property type="entry name" value="clpX"/>
    <property type="match status" value="1"/>
</dbReference>
<dbReference type="NCBIfam" id="NF003745">
    <property type="entry name" value="PRK05342.1"/>
    <property type="match status" value="1"/>
</dbReference>
<dbReference type="PANTHER" id="PTHR48102:SF7">
    <property type="entry name" value="ATP-DEPENDENT CLP PROTEASE ATP-BINDING SUBUNIT CLPX-LIKE, MITOCHONDRIAL"/>
    <property type="match status" value="1"/>
</dbReference>
<dbReference type="PANTHER" id="PTHR48102">
    <property type="entry name" value="ATP-DEPENDENT CLP PROTEASE ATP-BINDING SUBUNIT CLPX-LIKE, MITOCHONDRIAL-RELATED"/>
    <property type="match status" value="1"/>
</dbReference>
<dbReference type="Pfam" id="PF07724">
    <property type="entry name" value="AAA_2"/>
    <property type="match status" value="1"/>
</dbReference>
<dbReference type="Pfam" id="PF10431">
    <property type="entry name" value="ClpB_D2-small"/>
    <property type="match status" value="1"/>
</dbReference>
<dbReference type="Pfam" id="PF06689">
    <property type="entry name" value="zf-C4_ClpX"/>
    <property type="match status" value="1"/>
</dbReference>
<dbReference type="SMART" id="SM00382">
    <property type="entry name" value="AAA"/>
    <property type="match status" value="1"/>
</dbReference>
<dbReference type="SMART" id="SM01086">
    <property type="entry name" value="ClpB_D2-small"/>
    <property type="match status" value="1"/>
</dbReference>
<dbReference type="SMART" id="SM00994">
    <property type="entry name" value="zf-C4_ClpX"/>
    <property type="match status" value="1"/>
</dbReference>
<dbReference type="SUPFAM" id="SSF57716">
    <property type="entry name" value="Glucocorticoid receptor-like (DNA-binding domain)"/>
    <property type="match status" value="1"/>
</dbReference>
<dbReference type="SUPFAM" id="SSF52540">
    <property type="entry name" value="P-loop containing nucleoside triphosphate hydrolases"/>
    <property type="match status" value="1"/>
</dbReference>
<dbReference type="PROSITE" id="PS51902">
    <property type="entry name" value="CLPX_ZB"/>
    <property type="match status" value="1"/>
</dbReference>
<reference key="1">
    <citation type="journal article" date="2006" name="Proc. Natl. Acad. Sci. U.S.A.">
        <title>Comparative genomics of the lactic acid bacteria.</title>
        <authorList>
            <person name="Makarova K.S."/>
            <person name="Slesarev A."/>
            <person name="Wolf Y.I."/>
            <person name="Sorokin A."/>
            <person name="Mirkin B."/>
            <person name="Koonin E.V."/>
            <person name="Pavlov A."/>
            <person name="Pavlova N."/>
            <person name="Karamychev V."/>
            <person name="Polouchine N."/>
            <person name="Shakhova V."/>
            <person name="Grigoriev I."/>
            <person name="Lou Y."/>
            <person name="Rohksar D."/>
            <person name="Lucas S."/>
            <person name="Huang K."/>
            <person name="Goodstein D.M."/>
            <person name="Hawkins T."/>
            <person name="Plengvidhya V."/>
            <person name="Welker D."/>
            <person name="Hughes J."/>
            <person name="Goh Y."/>
            <person name="Benson A."/>
            <person name="Baldwin K."/>
            <person name="Lee J.-H."/>
            <person name="Diaz-Muniz I."/>
            <person name="Dosti B."/>
            <person name="Smeianov V."/>
            <person name="Wechter W."/>
            <person name="Barabote R."/>
            <person name="Lorca G."/>
            <person name="Altermann E."/>
            <person name="Barrangou R."/>
            <person name="Ganesan B."/>
            <person name="Xie Y."/>
            <person name="Rawsthorne H."/>
            <person name="Tamir D."/>
            <person name="Parker C."/>
            <person name="Breidt F."/>
            <person name="Broadbent J.R."/>
            <person name="Hutkins R."/>
            <person name="O'Sullivan D."/>
            <person name="Steele J."/>
            <person name="Unlu G."/>
            <person name="Saier M.H. Jr."/>
            <person name="Klaenhammer T."/>
            <person name="Richardson P."/>
            <person name="Kozyavkin S."/>
            <person name="Weimer B.C."/>
            <person name="Mills D.A."/>
        </authorList>
    </citation>
    <scope>NUCLEOTIDE SEQUENCE [LARGE SCALE GENOMIC DNA]</scope>
    <source>
        <strain>ATCC 367 / BCRC 12310 / CIP 105137 / JCM 1170 / LMG 11437 / NCIMB 947 / NCTC 947</strain>
    </source>
</reference>
<keyword id="KW-0067">ATP-binding</keyword>
<keyword id="KW-0143">Chaperone</keyword>
<keyword id="KW-0479">Metal-binding</keyword>
<keyword id="KW-0547">Nucleotide-binding</keyword>
<keyword id="KW-1185">Reference proteome</keyword>
<keyword id="KW-0862">Zinc</keyword>